<proteinExistence type="predicted"/>
<organism>
    <name type="scientific">Arabidopsis thaliana</name>
    <name type="common">Mouse-ear cress</name>
    <dbReference type="NCBI Taxonomy" id="3702"/>
    <lineage>
        <taxon>Eukaryota</taxon>
        <taxon>Viridiplantae</taxon>
        <taxon>Streptophyta</taxon>
        <taxon>Embryophyta</taxon>
        <taxon>Tracheophyta</taxon>
        <taxon>Spermatophyta</taxon>
        <taxon>Magnoliopsida</taxon>
        <taxon>eudicotyledons</taxon>
        <taxon>Gunneridae</taxon>
        <taxon>Pentapetalae</taxon>
        <taxon>rosids</taxon>
        <taxon>malvids</taxon>
        <taxon>Brassicales</taxon>
        <taxon>Brassicaceae</taxon>
        <taxon>Camelineae</taxon>
        <taxon>Arabidopsis</taxon>
    </lineage>
</organism>
<gene>
    <name type="ordered locus">At1g47765</name>
    <name type="ORF">T2E6.16</name>
</gene>
<keyword id="KW-1185">Reference proteome</keyword>
<evidence type="ECO:0000256" key="1">
    <source>
        <dbReference type="SAM" id="MobiDB-lite"/>
    </source>
</evidence>
<evidence type="ECO:0000305" key="2"/>
<dbReference type="EMBL" id="AC012463">
    <property type="protein sequence ID" value="AAF99791.1"/>
    <property type="status" value="ALT_SEQ"/>
    <property type="molecule type" value="Genomic_DNA"/>
</dbReference>
<dbReference type="EMBL" id="CP002684">
    <property type="protein sequence ID" value="AEE32210.1"/>
    <property type="molecule type" value="Genomic_DNA"/>
</dbReference>
<dbReference type="PIR" id="C96518">
    <property type="entry name" value="C96518"/>
</dbReference>
<dbReference type="RefSeq" id="NP_175208.1">
    <property type="nucleotide sequence ID" value="NM_103670.1"/>
</dbReference>
<dbReference type="SMR" id="Q9FZF3"/>
<dbReference type="FunCoup" id="Q9FZF3">
    <property type="interactions" value="12"/>
</dbReference>
<dbReference type="STRING" id="3702.Q9FZF3"/>
<dbReference type="PaxDb" id="3702-AT1G47765.1"/>
<dbReference type="EnsemblPlants" id="AT1G47765.1">
    <property type="protein sequence ID" value="AT1G47765.1"/>
    <property type="gene ID" value="AT1G47765"/>
</dbReference>
<dbReference type="GeneID" id="841188"/>
<dbReference type="Gramene" id="AT1G47765.1">
    <property type="protein sequence ID" value="AT1G47765.1"/>
    <property type="gene ID" value="AT1G47765"/>
</dbReference>
<dbReference type="KEGG" id="ath:AT1G47765"/>
<dbReference type="Araport" id="AT1G47765"/>
<dbReference type="TAIR" id="AT1G47765"/>
<dbReference type="HOGENOM" id="CLU_027176_8_1_1"/>
<dbReference type="InParanoid" id="Q9FZF3"/>
<dbReference type="OMA" id="FADDESW"/>
<dbReference type="PRO" id="PR:Q9FZF3"/>
<dbReference type="Proteomes" id="UP000006548">
    <property type="component" value="Chromosome 1"/>
</dbReference>
<dbReference type="CDD" id="cd22157">
    <property type="entry name" value="F-box_AtFBW1-like"/>
    <property type="match status" value="1"/>
</dbReference>
<dbReference type="Gene3D" id="1.20.1280.50">
    <property type="match status" value="1"/>
</dbReference>
<dbReference type="InterPro" id="IPR013187">
    <property type="entry name" value="F-box-assoc_dom_typ3"/>
</dbReference>
<dbReference type="InterPro" id="IPR017451">
    <property type="entry name" value="F-box-assoc_interact_dom"/>
</dbReference>
<dbReference type="InterPro" id="IPR036047">
    <property type="entry name" value="F-box-like_dom_sf"/>
</dbReference>
<dbReference type="InterPro" id="IPR001810">
    <property type="entry name" value="F-box_dom"/>
</dbReference>
<dbReference type="NCBIfam" id="TIGR01640">
    <property type="entry name" value="F_box_assoc_1"/>
    <property type="match status" value="1"/>
</dbReference>
<dbReference type="PANTHER" id="PTHR31111">
    <property type="entry name" value="BNAA05G37150D PROTEIN-RELATED"/>
    <property type="match status" value="1"/>
</dbReference>
<dbReference type="PANTHER" id="PTHR31111:SF119">
    <property type="entry name" value="F-BOX DOMAIN-CONTAINING PROTEIN"/>
    <property type="match status" value="1"/>
</dbReference>
<dbReference type="Pfam" id="PF00646">
    <property type="entry name" value="F-box"/>
    <property type="match status" value="1"/>
</dbReference>
<dbReference type="Pfam" id="PF08268">
    <property type="entry name" value="FBA_3"/>
    <property type="match status" value="1"/>
</dbReference>
<dbReference type="SMART" id="SM00256">
    <property type="entry name" value="FBOX"/>
    <property type="match status" value="1"/>
</dbReference>
<dbReference type="SUPFAM" id="SSF81383">
    <property type="entry name" value="F-box domain"/>
    <property type="match status" value="1"/>
</dbReference>
<accession>Q9FZF3</accession>
<accession>F4HV34</accession>
<reference key="1">
    <citation type="journal article" date="2000" name="Nature">
        <title>Sequence and analysis of chromosome 1 of the plant Arabidopsis thaliana.</title>
        <authorList>
            <person name="Theologis A."/>
            <person name="Ecker J.R."/>
            <person name="Palm C.J."/>
            <person name="Federspiel N.A."/>
            <person name="Kaul S."/>
            <person name="White O."/>
            <person name="Alonso J."/>
            <person name="Altafi H."/>
            <person name="Araujo R."/>
            <person name="Bowman C.L."/>
            <person name="Brooks S.Y."/>
            <person name="Buehler E."/>
            <person name="Chan A."/>
            <person name="Chao Q."/>
            <person name="Chen H."/>
            <person name="Cheuk R.F."/>
            <person name="Chin C.W."/>
            <person name="Chung M.K."/>
            <person name="Conn L."/>
            <person name="Conway A.B."/>
            <person name="Conway A.R."/>
            <person name="Creasy T.H."/>
            <person name="Dewar K."/>
            <person name="Dunn P."/>
            <person name="Etgu P."/>
            <person name="Feldblyum T.V."/>
            <person name="Feng J.-D."/>
            <person name="Fong B."/>
            <person name="Fujii C.Y."/>
            <person name="Gill J.E."/>
            <person name="Goldsmith A.D."/>
            <person name="Haas B."/>
            <person name="Hansen N.F."/>
            <person name="Hughes B."/>
            <person name="Huizar L."/>
            <person name="Hunter J.L."/>
            <person name="Jenkins J."/>
            <person name="Johnson-Hopson C."/>
            <person name="Khan S."/>
            <person name="Khaykin E."/>
            <person name="Kim C.J."/>
            <person name="Koo H.L."/>
            <person name="Kremenetskaia I."/>
            <person name="Kurtz D.B."/>
            <person name="Kwan A."/>
            <person name="Lam B."/>
            <person name="Langin-Hooper S."/>
            <person name="Lee A."/>
            <person name="Lee J.M."/>
            <person name="Lenz C.A."/>
            <person name="Li J.H."/>
            <person name="Li Y.-P."/>
            <person name="Lin X."/>
            <person name="Liu S.X."/>
            <person name="Liu Z.A."/>
            <person name="Luros J.S."/>
            <person name="Maiti R."/>
            <person name="Marziali A."/>
            <person name="Militscher J."/>
            <person name="Miranda M."/>
            <person name="Nguyen M."/>
            <person name="Nierman W.C."/>
            <person name="Osborne B.I."/>
            <person name="Pai G."/>
            <person name="Peterson J."/>
            <person name="Pham P.K."/>
            <person name="Rizzo M."/>
            <person name="Rooney T."/>
            <person name="Rowley D."/>
            <person name="Sakano H."/>
            <person name="Salzberg S.L."/>
            <person name="Schwartz J.R."/>
            <person name="Shinn P."/>
            <person name="Southwick A.M."/>
            <person name="Sun H."/>
            <person name="Tallon L.J."/>
            <person name="Tambunga G."/>
            <person name="Toriumi M.J."/>
            <person name="Town C.D."/>
            <person name="Utterback T."/>
            <person name="Van Aken S."/>
            <person name="Vaysberg M."/>
            <person name="Vysotskaia V.S."/>
            <person name="Walker M."/>
            <person name="Wu D."/>
            <person name="Yu G."/>
            <person name="Fraser C.M."/>
            <person name="Venter J.C."/>
            <person name="Davis R.W."/>
        </authorList>
    </citation>
    <scope>NUCLEOTIDE SEQUENCE [LARGE SCALE GENOMIC DNA]</scope>
    <source>
        <strain>cv. Columbia</strain>
    </source>
</reference>
<reference key="2">
    <citation type="journal article" date="2017" name="Plant J.">
        <title>Araport11: a complete reannotation of the Arabidopsis thaliana reference genome.</title>
        <authorList>
            <person name="Cheng C.Y."/>
            <person name="Krishnakumar V."/>
            <person name="Chan A.P."/>
            <person name="Thibaud-Nissen F."/>
            <person name="Schobel S."/>
            <person name="Town C.D."/>
        </authorList>
    </citation>
    <scope>GENOME REANNOTATION</scope>
    <source>
        <strain>cv. Columbia</strain>
    </source>
</reference>
<feature type="chain" id="PRO_0000283319" description="Putative F-box protein At1g47765">
    <location>
        <begin position="1"/>
        <end position="385"/>
    </location>
</feature>
<feature type="domain" description="F-box">
    <location>
        <begin position="20"/>
        <end position="69"/>
    </location>
</feature>
<feature type="region of interest" description="Disordered" evidence="1">
    <location>
        <begin position="1"/>
        <end position="24"/>
    </location>
</feature>
<feature type="compositionally biased region" description="Basic residues" evidence="1">
    <location>
        <begin position="1"/>
        <end position="19"/>
    </location>
</feature>
<comment type="sequence caution" evidence="2">
    <conflict type="erroneous gene model prediction">
        <sequence resource="EMBL-CDS" id="AAF99791"/>
    </conflict>
</comment>
<name>FB43_ARATH</name>
<protein>
    <recommendedName>
        <fullName>Putative F-box protein At1g47765</fullName>
    </recommendedName>
</protein>
<sequence length="385" mass="44986">MEQQKQKKRKVVSKSKRTQSKSASSLPLDLTSEILLRLPEKSIARFRCVSKLWLSITTDPYFINLFETRSPRPSLLVCFIENDKLFVSSIPQHLHSLQNSKRSYSSSQLFIVIIWNYQKDVGLICFKTSKMPIVWNPSKRQLITLPIPRLSWNNIIVFLGYDPVEGKHKVMCLPFRRSSDVCQVLTLGPAQEFSWITVKTYHKHCSDYQSSGRCIKGVVYYIAQVYHTHAWVLMCFDVRSEKFDMIKLHADIYREILITYEGRIACVEKRTTKDDYIALCILEDAKKDKWSSKDILAPFGHFDERLRTFFQLKGCTHDGEFIFVSSTFRKMDYILFFDPVKKTFRRFELKEIADDQARVNNGDPYGPIFAFCAFLDHVESQMSLQ</sequence>